<proteinExistence type="inferred from homology"/>
<comment type="function">
    <text evidence="1">Catalyzes the NADPH-dependent reduction of glutamyl-tRNA(Glu) to glutamate 1-semialdehyde (GSA).</text>
</comment>
<comment type="catalytic activity">
    <reaction evidence="1">
        <text>(S)-4-amino-5-oxopentanoate + tRNA(Glu) + NADP(+) = L-glutamyl-tRNA(Glu) + NADPH + H(+)</text>
        <dbReference type="Rhea" id="RHEA:12344"/>
        <dbReference type="Rhea" id="RHEA-COMP:9663"/>
        <dbReference type="Rhea" id="RHEA-COMP:9680"/>
        <dbReference type="ChEBI" id="CHEBI:15378"/>
        <dbReference type="ChEBI" id="CHEBI:57501"/>
        <dbReference type="ChEBI" id="CHEBI:57783"/>
        <dbReference type="ChEBI" id="CHEBI:58349"/>
        <dbReference type="ChEBI" id="CHEBI:78442"/>
        <dbReference type="ChEBI" id="CHEBI:78520"/>
        <dbReference type="EC" id="1.2.1.70"/>
    </reaction>
</comment>
<comment type="pathway">
    <text evidence="1">Porphyrin-containing compound metabolism; protoporphyrin-IX biosynthesis; 5-aminolevulinate from L-glutamyl-tRNA(Glu): step 1/2.</text>
</comment>
<comment type="subunit">
    <text evidence="1">Homodimer.</text>
</comment>
<comment type="domain">
    <text evidence="1">Possesses an unusual extended V-shaped dimeric structure with each monomer consisting of three distinct domains arranged along a curved 'spinal' alpha-helix. The N-terminal catalytic domain specifically recognizes the glutamate moiety of the substrate. The second domain is the NADPH-binding domain, and the third C-terminal domain is responsible for dimerization.</text>
</comment>
<comment type="miscellaneous">
    <text evidence="1">During catalysis, the active site Cys acts as a nucleophile attacking the alpha-carbonyl group of tRNA-bound glutamate with the formation of a thioester intermediate between enzyme and glutamate, and the concomitant release of tRNA(Glu). The thioester intermediate is finally reduced by direct hydride transfer from NADPH, to form the product GSA.</text>
</comment>
<comment type="similarity">
    <text evidence="1">Belongs to the glutamyl-tRNA reductase family.</text>
</comment>
<feature type="chain" id="PRO_0000114103" description="Glutamyl-tRNA reductase">
    <location>
        <begin position="1"/>
        <end position="448"/>
    </location>
</feature>
<feature type="active site" description="Nucleophile" evidence="1">
    <location>
        <position position="49"/>
    </location>
</feature>
<feature type="binding site" evidence="1">
    <location>
        <begin position="48"/>
        <end position="51"/>
    </location>
    <ligand>
        <name>substrate</name>
    </ligand>
</feature>
<feature type="binding site" evidence="1">
    <location>
        <position position="100"/>
    </location>
    <ligand>
        <name>substrate</name>
    </ligand>
</feature>
<feature type="binding site" evidence="1">
    <location>
        <begin position="105"/>
        <end position="107"/>
    </location>
    <ligand>
        <name>substrate</name>
    </ligand>
</feature>
<feature type="binding site" evidence="1">
    <location>
        <position position="111"/>
    </location>
    <ligand>
        <name>substrate</name>
    </ligand>
</feature>
<feature type="binding site" evidence="1">
    <location>
        <begin position="180"/>
        <end position="185"/>
    </location>
    <ligand>
        <name>NADP(+)</name>
        <dbReference type="ChEBI" id="CHEBI:58349"/>
    </ligand>
</feature>
<feature type="site" description="Important for activity" evidence="1">
    <location>
        <position position="90"/>
    </location>
</feature>
<organism>
    <name type="scientific">Methanosarcina mazei (strain ATCC BAA-159 / DSM 3647 / Goe1 / Go1 / JCM 11833 / OCM 88)</name>
    <name type="common">Methanosarcina frisia</name>
    <dbReference type="NCBI Taxonomy" id="192952"/>
    <lineage>
        <taxon>Archaea</taxon>
        <taxon>Methanobacteriati</taxon>
        <taxon>Methanobacteriota</taxon>
        <taxon>Stenosarchaea group</taxon>
        <taxon>Methanomicrobia</taxon>
        <taxon>Methanosarcinales</taxon>
        <taxon>Methanosarcinaceae</taxon>
        <taxon>Methanosarcina</taxon>
    </lineage>
</organism>
<sequence>MTEISSMVISHKKAKVEEMESAWHGDLDGLLRNLYKHEYVYECVVLKTCNRVEIYVVSPKSSSVLFSFAKEMGASTHIIDFYGHDESLEHLLRLAGGLESMIVGEDQILGQIKDLYAYSKKAGTTGKILETAFEKAIQVGKRIRNETRINKGSVSIGSAAVDLAEDIFGGLTGKNVLVIGAGEIGVLVAKALAEKDIEAIYIANRTYKKAEEIAYELGGHAVRLDDIRDYLPGADVVISGTGAPHYILTREIVEEAIKCRERKLLLIDIANPRDIEESVVELENVELCNIDNLRVISERTLRMRKEEAKKAEAIIQEEIRLLNLQYKRQKADRLISELYKQVYDVRLRERQKAVNRLSSYHTIGDIETEVLDDLTRSIVNKILGEPTKVLRQAAELGNEEFLDVVSRVFCLDKEKVRFEKIKQAKFDQIKPGCTKEQAEVKEEYAVKD</sequence>
<gene>
    <name evidence="1" type="primary">hemA</name>
    <name type="ordered locus">MM_1741</name>
</gene>
<reference key="1">
    <citation type="journal article" date="2002" name="J. Mol. Microbiol. Biotechnol.">
        <title>The genome of Methanosarcina mazei: evidence for lateral gene transfer between Bacteria and Archaea.</title>
        <authorList>
            <person name="Deppenmeier U."/>
            <person name="Johann A."/>
            <person name="Hartsch T."/>
            <person name="Merkl R."/>
            <person name="Schmitz R.A."/>
            <person name="Martinez-Arias R."/>
            <person name="Henne A."/>
            <person name="Wiezer A."/>
            <person name="Baeumer S."/>
            <person name="Jacobi C."/>
            <person name="Brueggemann H."/>
            <person name="Lienard T."/>
            <person name="Christmann A."/>
            <person name="Boemecke M."/>
            <person name="Steckel S."/>
            <person name="Bhattacharyya A."/>
            <person name="Lykidis A."/>
            <person name="Overbeek R."/>
            <person name="Klenk H.-P."/>
            <person name="Gunsalus R.P."/>
            <person name="Fritz H.-J."/>
            <person name="Gottschalk G."/>
        </authorList>
    </citation>
    <scope>NUCLEOTIDE SEQUENCE [LARGE SCALE GENOMIC DNA]</scope>
    <source>
        <strain>ATCC BAA-159 / DSM 3647 / Goe1 / Go1 / JCM 11833 / OCM 88</strain>
    </source>
</reference>
<name>HEM1_METMA</name>
<evidence type="ECO:0000255" key="1">
    <source>
        <dbReference type="HAMAP-Rule" id="MF_00087"/>
    </source>
</evidence>
<keyword id="KW-0521">NADP</keyword>
<keyword id="KW-0560">Oxidoreductase</keyword>
<keyword id="KW-0627">Porphyrin biosynthesis</keyword>
<accession>Q8PW60</accession>
<protein>
    <recommendedName>
        <fullName evidence="1">Glutamyl-tRNA reductase</fullName>
        <shortName evidence="1">GluTR</shortName>
        <ecNumber evidence="1">1.2.1.70</ecNumber>
    </recommendedName>
</protein>
<dbReference type="EC" id="1.2.1.70" evidence="1"/>
<dbReference type="EMBL" id="AE008384">
    <property type="protein sequence ID" value="AAM31437.1"/>
    <property type="molecule type" value="Genomic_DNA"/>
</dbReference>
<dbReference type="RefSeq" id="WP_011033681.1">
    <property type="nucleotide sequence ID" value="NC_003901.1"/>
</dbReference>
<dbReference type="SMR" id="Q8PW60"/>
<dbReference type="GeneID" id="82160792"/>
<dbReference type="KEGG" id="mma:MM_1741"/>
<dbReference type="PATRIC" id="fig|192952.21.peg.2017"/>
<dbReference type="eggNOG" id="arCOG01036">
    <property type="taxonomic scope" value="Archaea"/>
</dbReference>
<dbReference type="HOGENOM" id="CLU_035113_0_0_2"/>
<dbReference type="UniPathway" id="UPA00251">
    <property type="reaction ID" value="UER00316"/>
</dbReference>
<dbReference type="Proteomes" id="UP000000595">
    <property type="component" value="Chromosome"/>
</dbReference>
<dbReference type="GO" id="GO:0008883">
    <property type="term" value="F:glutamyl-tRNA reductase activity"/>
    <property type="evidence" value="ECO:0007669"/>
    <property type="project" value="UniProtKB-UniRule"/>
</dbReference>
<dbReference type="GO" id="GO:0050661">
    <property type="term" value="F:NADP binding"/>
    <property type="evidence" value="ECO:0007669"/>
    <property type="project" value="InterPro"/>
</dbReference>
<dbReference type="GO" id="GO:0019353">
    <property type="term" value="P:protoporphyrinogen IX biosynthetic process from glutamate"/>
    <property type="evidence" value="ECO:0007669"/>
    <property type="project" value="TreeGrafter"/>
</dbReference>
<dbReference type="CDD" id="cd05213">
    <property type="entry name" value="NAD_bind_Glutamyl_tRNA_reduct"/>
    <property type="match status" value="1"/>
</dbReference>
<dbReference type="FunFam" id="3.30.460.30:FF:000001">
    <property type="entry name" value="Glutamyl-tRNA reductase"/>
    <property type="match status" value="1"/>
</dbReference>
<dbReference type="FunFam" id="3.40.50.720:FF:000031">
    <property type="entry name" value="Glutamyl-tRNA reductase"/>
    <property type="match status" value="1"/>
</dbReference>
<dbReference type="Gene3D" id="3.30.460.30">
    <property type="entry name" value="Glutamyl-tRNA reductase, N-terminal domain"/>
    <property type="match status" value="1"/>
</dbReference>
<dbReference type="Gene3D" id="3.40.50.720">
    <property type="entry name" value="NAD(P)-binding Rossmann-like Domain"/>
    <property type="match status" value="1"/>
</dbReference>
<dbReference type="HAMAP" id="MF_00087">
    <property type="entry name" value="Glu_tRNA_reductase"/>
    <property type="match status" value="1"/>
</dbReference>
<dbReference type="InterPro" id="IPR000343">
    <property type="entry name" value="4pyrrol_synth_GluRdtase"/>
</dbReference>
<dbReference type="InterPro" id="IPR015896">
    <property type="entry name" value="4pyrrol_synth_GluRdtase_dimer"/>
</dbReference>
<dbReference type="InterPro" id="IPR015895">
    <property type="entry name" value="4pyrrol_synth_GluRdtase_N"/>
</dbReference>
<dbReference type="InterPro" id="IPR018214">
    <property type="entry name" value="GluRdtase_CS"/>
</dbReference>
<dbReference type="InterPro" id="IPR036453">
    <property type="entry name" value="GluRdtase_dimer_dom_sf"/>
</dbReference>
<dbReference type="InterPro" id="IPR036343">
    <property type="entry name" value="GluRdtase_N_sf"/>
</dbReference>
<dbReference type="InterPro" id="IPR036291">
    <property type="entry name" value="NAD(P)-bd_dom_sf"/>
</dbReference>
<dbReference type="InterPro" id="IPR006151">
    <property type="entry name" value="Shikm_DH/Glu-tRNA_Rdtase"/>
</dbReference>
<dbReference type="NCBIfam" id="TIGR01035">
    <property type="entry name" value="hemA"/>
    <property type="match status" value="1"/>
</dbReference>
<dbReference type="PANTHER" id="PTHR43013">
    <property type="entry name" value="GLUTAMYL-TRNA REDUCTASE"/>
    <property type="match status" value="1"/>
</dbReference>
<dbReference type="PANTHER" id="PTHR43013:SF1">
    <property type="entry name" value="GLUTAMYL-TRNA REDUCTASE"/>
    <property type="match status" value="1"/>
</dbReference>
<dbReference type="Pfam" id="PF00745">
    <property type="entry name" value="GlutR_dimer"/>
    <property type="match status" value="1"/>
</dbReference>
<dbReference type="Pfam" id="PF05201">
    <property type="entry name" value="GlutR_N"/>
    <property type="match status" value="1"/>
</dbReference>
<dbReference type="Pfam" id="PF01488">
    <property type="entry name" value="Shikimate_DH"/>
    <property type="match status" value="1"/>
</dbReference>
<dbReference type="PIRSF" id="PIRSF000445">
    <property type="entry name" value="4pyrrol_synth_GluRdtase"/>
    <property type="match status" value="1"/>
</dbReference>
<dbReference type="SUPFAM" id="SSF69742">
    <property type="entry name" value="Glutamyl tRNA-reductase catalytic, N-terminal domain"/>
    <property type="match status" value="1"/>
</dbReference>
<dbReference type="SUPFAM" id="SSF69075">
    <property type="entry name" value="Glutamyl tRNA-reductase dimerization domain"/>
    <property type="match status" value="1"/>
</dbReference>
<dbReference type="SUPFAM" id="SSF51735">
    <property type="entry name" value="NAD(P)-binding Rossmann-fold domains"/>
    <property type="match status" value="1"/>
</dbReference>
<dbReference type="PROSITE" id="PS00747">
    <property type="entry name" value="GLUTR"/>
    <property type="match status" value="1"/>
</dbReference>